<evidence type="ECO:0000255" key="1">
    <source>
        <dbReference type="HAMAP-Rule" id="MF_01853"/>
    </source>
</evidence>
<reference key="1">
    <citation type="journal article" date="2008" name="J. Bacteriol.">
        <title>The complete genome sequence of Thermococcus onnurineus NA1 reveals a mixed heterotrophic and carboxydotrophic metabolism.</title>
        <authorList>
            <person name="Lee H.S."/>
            <person name="Kang S.G."/>
            <person name="Bae S.S."/>
            <person name="Lim J.K."/>
            <person name="Cho Y."/>
            <person name="Kim Y.J."/>
            <person name="Jeon J.H."/>
            <person name="Cha S.-S."/>
            <person name="Kwon K.K."/>
            <person name="Kim H.-T."/>
            <person name="Park C.-J."/>
            <person name="Lee H.-W."/>
            <person name="Kim S.I."/>
            <person name="Chun J."/>
            <person name="Colwell R.R."/>
            <person name="Kim S.-J."/>
            <person name="Lee J.-H."/>
        </authorList>
    </citation>
    <scope>NUCLEOTIDE SEQUENCE [LARGE SCALE GENOMIC DNA]</scope>
    <source>
        <strain>NA1</strain>
    </source>
</reference>
<feature type="chain" id="PRO_1000188680" description="Protein pelota homolog">
    <location>
        <begin position="1"/>
        <end position="357"/>
    </location>
</feature>
<protein>
    <recommendedName>
        <fullName evidence="1">Protein pelota homolog</fullName>
        <ecNumber evidence="1">3.1.-.-</ecNumber>
    </recommendedName>
</protein>
<keyword id="KW-0963">Cytoplasm</keyword>
<keyword id="KW-0255">Endonuclease</keyword>
<keyword id="KW-0378">Hydrolase</keyword>
<keyword id="KW-0479">Metal-binding</keyword>
<keyword id="KW-0540">Nuclease</keyword>
<name>PELO_THEON</name>
<gene>
    <name evidence="1" type="primary">pelA</name>
    <name type="ordered locus">TON_0652</name>
</gene>
<organism>
    <name type="scientific">Thermococcus onnurineus (strain NA1)</name>
    <dbReference type="NCBI Taxonomy" id="523850"/>
    <lineage>
        <taxon>Archaea</taxon>
        <taxon>Methanobacteriati</taxon>
        <taxon>Methanobacteriota</taxon>
        <taxon>Thermococci</taxon>
        <taxon>Thermococcales</taxon>
        <taxon>Thermococcaceae</taxon>
        <taxon>Thermococcus</taxon>
    </lineage>
</organism>
<accession>B6YUV3</accession>
<dbReference type="EC" id="3.1.-.-" evidence="1"/>
<dbReference type="EMBL" id="CP000855">
    <property type="protein sequence ID" value="ACJ16139.1"/>
    <property type="molecule type" value="Genomic_DNA"/>
</dbReference>
<dbReference type="RefSeq" id="WP_012571611.1">
    <property type="nucleotide sequence ID" value="NC_011529.1"/>
</dbReference>
<dbReference type="SMR" id="B6YUV3"/>
<dbReference type="STRING" id="523850.TON_0652"/>
<dbReference type="GeneID" id="7016951"/>
<dbReference type="KEGG" id="ton:TON_0652"/>
<dbReference type="PATRIC" id="fig|523850.10.peg.654"/>
<dbReference type="eggNOG" id="arCOG01741">
    <property type="taxonomic scope" value="Archaea"/>
</dbReference>
<dbReference type="HOGENOM" id="CLU_023334_0_0_2"/>
<dbReference type="OrthoDB" id="31300at2157"/>
<dbReference type="Proteomes" id="UP000002727">
    <property type="component" value="Chromosome"/>
</dbReference>
<dbReference type="GO" id="GO:0005737">
    <property type="term" value="C:cytoplasm"/>
    <property type="evidence" value="ECO:0007669"/>
    <property type="project" value="UniProtKB-SubCell"/>
</dbReference>
<dbReference type="GO" id="GO:0004519">
    <property type="term" value="F:endonuclease activity"/>
    <property type="evidence" value="ECO:0007669"/>
    <property type="project" value="UniProtKB-UniRule"/>
</dbReference>
<dbReference type="GO" id="GO:0046872">
    <property type="term" value="F:metal ion binding"/>
    <property type="evidence" value="ECO:0007669"/>
    <property type="project" value="UniProtKB-UniRule"/>
</dbReference>
<dbReference type="GO" id="GO:0070651">
    <property type="term" value="P:nonfunctional rRNA decay"/>
    <property type="evidence" value="ECO:0007669"/>
    <property type="project" value="TreeGrafter"/>
</dbReference>
<dbReference type="GO" id="GO:0070966">
    <property type="term" value="P:nuclear-transcribed mRNA catabolic process, no-go decay"/>
    <property type="evidence" value="ECO:0007669"/>
    <property type="project" value="InterPro"/>
</dbReference>
<dbReference type="GO" id="GO:0070481">
    <property type="term" value="P:nuclear-transcribed mRNA catabolic process, non-stop decay"/>
    <property type="evidence" value="ECO:0007669"/>
    <property type="project" value="InterPro"/>
</dbReference>
<dbReference type="GO" id="GO:0032790">
    <property type="term" value="P:ribosome disassembly"/>
    <property type="evidence" value="ECO:0007669"/>
    <property type="project" value="TreeGrafter"/>
</dbReference>
<dbReference type="GO" id="GO:0071025">
    <property type="term" value="P:RNA surveillance"/>
    <property type="evidence" value="ECO:0007669"/>
    <property type="project" value="InterPro"/>
</dbReference>
<dbReference type="FunFam" id="2.30.30.870:FF:000002">
    <property type="entry name" value="Protein pelota homolog"/>
    <property type="match status" value="1"/>
</dbReference>
<dbReference type="FunFam" id="3.30.1330.30:FF:000059">
    <property type="entry name" value="Protein pelota homolog"/>
    <property type="match status" value="1"/>
</dbReference>
<dbReference type="FunFam" id="3.30.420.60:FF:000005">
    <property type="entry name" value="Protein pelota homolog"/>
    <property type="match status" value="1"/>
</dbReference>
<dbReference type="Gene3D" id="3.30.1330.30">
    <property type="match status" value="1"/>
</dbReference>
<dbReference type="Gene3D" id="3.30.420.60">
    <property type="entry name" value="eRF1 domain 2"/>
    <property type="match status" value="1"/>
</dbReference>
<dbReference type="Gene3D" id="2.30.30.870">
    <property type="entry name" value="Pelota, domain A"/>
    <property type="match status" value="1"/>
</dbReference>
<dbReference type="HAMAP" id="MF_01853">
    <property type="entry name" value="PelO"/>
    <property type="match status" value="1"/>
</dbReference>
<dbReference type="InterPro" id="IPR042226">
    <property type="entry name" value="eFR1_2_sf"/>
</dbReference>
<dbReference type="InterPro" id="IPR005140">
    <property type="entry name" value="eRF1_1_Pelota"/>
</dbReference>
<dbReference type="InterPro" id="IPR005141">
    <property type="entry name" value="eRF1_2"/>
</dbReference>
<dbReference type="InterPro" id="IPR005142">
    <property type="entry name" value="eRF1_3"/>
</dbReference>
<dbReference type="InterPro" id="IPR038069">
    <property type="entry name" value="Pelota/DOM34_N"/>
</dbReference>
<dbReference type="InterPro" id="IPR023521">
    <property type="entry name" value="Pelota_arc"/>
</dbReference>
<dbReference type="InterPro" id="IPR029064">
    <property type="entry name" value="Ribosomal_eL30-like_sf"/>
</dbReference>
<dbReference type="InterPro" id="IPR004405">
    <property type="entry name" value="Transl-rel_pelota"/>
</dbReference>
<dbReference type="NCBIfam" id="TIGR00111">
    <property type="entry name" value="pelota"/>
    <property type="match status" value="1"/>
</dbReference>
<dbReference type="PANTHER" id="PTHR10853">
    <property type="entry name" value="PELOTA"/>
    <property type="match status" value="1"/>
</dbReference>
<dbReference type="PANTHER" id="PTHR10853:SF0">
    <property type="entry name" value="PROTEIN PELOTA HOMOLOG"/>
    <property type="match status" value="1"/>
</dbReference>
<dbReference type="Pfam" id="PF03463">
    <property type="entry name" value="eRF1_1"/>
    <property type="match status" value="1"/>
</dbReference>
<dbReference type="Pfam" id="PF03464">
    <property type="entry name" value="eRF1_2"/>
    <property type="match status" value="1"/>
</dbReference>
<dbReference type="Pfam" id="PF03465">
    <property type="entry name" value="eRF1_3"/>
    <property type="match status" value="1"/>
</dbReference>
<dbReference type="SMART" id="SM01194">
    <property type="entry name" value="eRF1_1"/>
    <property type="match status" value="1"/>
</dbReference>
<dbReference type="SUPFAM" id="SSF159065">
    <property type="entry name" value="Dom34/Pelota N-terminal domain-like"/>
    <property type="match status" value="1"/>
</dbReference>
<dbReference type="SUPFAM" id="SSF55315">
    <property type="entry name" value="L30e-like"/>
    <property type="match status" value="1"/>
</dbReference>
<dbReference type="SUPFAM" id="SSF53137">
    <property type="entry name" value="Translational machinery components"/>
    <property type="match status" value="1"/>
</dbReference>
<comment type="function">
    <text evidence="1">May function in recognizing stalled ribosomes, interact with stem-loop structures in stalled mRNA molecules, and effect endonucleolytic cleavage of the mRNA. May play a role in the release non-functional ribosomes and degradation of damaged mRNAs. Has endoribonuclease activity.</text>
</comment>
<comment type="cofactor">
    <cofactor evidence="1">
        <name>a divalent metal cation</name>
        <dbReference type="ChEBI" id="CHEBI:60240"/>
    </cofactor>
</comment>
<comment type="subunit">
    <text evidence="1">Monomer.</text>
</comment>
<comment type="subcellular location">
    <subcellularLocation>
        <location evidence="1">Cytoplasm</location>
    </subcellularLocation>
</comment>
<comment type="domain">
    <text evidence="1">The N-terminal domain has the RNA-binding Sm fold. It harbors the endoribonuclease activity.</text>
</comment>
<comment type="similarity">
    <text evidence="1">Belongs to the eukaryotic release factor 1 family. Pelota subfamily.</text>
</comment>
<proteinExistence type="inferred from homology"/>
<sequence>MQIIHEDPKEGKVKVKAETLDDLWHLYHIIDEGDVVYAKTLRKQSQRSDSLRAEKVEVIPVFLGVRAEKINFHKFANQVRVTGPIVYASREDVPLGKYHTIAIEEGTVVTIQKPRWKEHHIERLREAVSASKRARVMIVVIDDGEADMALVREYGVEILTSIRHNLGGKRYNTDREAEEKRFFHDVAKTMEEIMNREKVEKAIVAGPGFVKEDFYKFLRENYPELVKKVVIEDTSVTGRTGIYEVIKRGTVDRVYHENRVAKEVQLIEKVLENIAKNNGLVAYGLREVEEAANYGAVETLLVLDELLKGEMREKIEELMDAVRYSRGEVVIVSSEHEGGEKLKALGGLAALLRFRVK</sequence>